<sequence length="329" mass="37330">MASQLTDAFARKFYYLRLSITDVCNFRCTYCLPDGYKPSGVTNKGFLTVDEIRRVTRAFASLGTEKVRLTGGEPSLRRDFTDIIAAVRENDAIRQIAVTTNGYRLERDVANWRDAGLTGINVSVDSLDARQFHAITGQDKFNQVMAGIDAAFEAGFEKVKVNTVLMRDVNHHQLDTFLNWIQHRPIQLRFIELMETGEGIELFRKHHISGQVLRDELLRRGWIHQLRQRSDGPAQVFCHPDYAGEIGLIMPYEKDFCATCNRLRVSSIGKLHLCLFGEGGVNLRDLLEDDTQQQALEARISAALREKKQTHFLHQNNTGITQNLSYIGG</sequence>
<proteinExistence type="inferred from homology"/>
<organism>
    <name type="scientific">Escherichia coli O7:K1 (strain IAI39 / ExPEC)</name>
    <dbReference type="NCBI Taxonomy" id="585057"/>
    <lineage>
        <taxon>Bacteria</taxon>
        <taxon>Pseudomonadati</taxon>
        <taxon>Pseudomonadota</taxon>
        <taxon>Gammaproteobacteria</taxon>
        <taxon>Enterobacterales</taxon>
        <taxon>Enterobacteriaceae</taxon>
        <taxon>Escherichia</taxon>
    </lineage>
</organism>
<accession>B7NNL1</accession>
<dbReference type="EC" id="4.1.99.22" evidence="1"/>
<dbReference type="EMBL" id="CU928164">
    <property type="protein sequence ID" value="CAR16894.1"/>
    <property type="molecule type" value="Genomic_DNA"/>
</dbReference>
<dbReference type="RefSeq" id="WP_001298683.1">
    <property type="nucleotide sequence ID" value="NC_011750.1"/>
</dbReference>
<dbReference type="RefSeq" id="YP_002406782.1">
    <property type="nucleotide sequence ID" value="NC_011750.1"/>
</dbReference>
<dbReference type="SMR" id="B7NNL1"/>
<dbReference type="STRING" id="585057.ECIAI39_0757"/>
<dbReference type="KEGG" id="ect:ECIAI39_0757"/>
<dbReference type="PATRIC" id="fig|585057.6.peg.800"/>
<dbReference type="HOGENOM" id="CLU_009273_0_1_6"/>
<dbReference type="UniPathway" id="UPA00344"/>
<dbReference type="Proteomes" id="UP000000749">
    <property type="component" value="Chromosome"/>
</dbReference>
<dbReference type="GO" id="GO:0051539">
    <property type="term" value="F:4 iron, 4 sulfur cluster binding"/>
    <property type="evidence" value="ECO:0007669"/>
    <property type="project" value="UniProtKB-UniRule"/>
</dbReference>
<dbReference type="GO" id="GO:0061799">
    <property type="term" value="F:cyclic pyranopterin monophosphate synthase activity"/>
    <property type="evidence" value="ECO:0007669"/>
    <property type="project" value="TreeGrafter"/>
</dbReference>
<dbReference type="GO" id="GO:0061798">
    <property type="term" value="F:GTP 3',8'-cyclase activity"/>
    <property type="evidence" value="ECO:0007669"/>
    <property type="project" value="UniProtKB-UniRule"/>
</dbReference>
<dbReference type="GO" id="GO:0005525">
    <property type="term" value="F:GTP binding"/>
    <property type="evidence" value="ECO:0007669"/>
    <property type="project" value="UniProtKB-UniRule"/>
</dbReference>
<dbReference type="GO" id="GO:0046872">
    <property type="term" value="F:metal ion binding"/>
    <property type="evidence" value="ECO:0007669"/>
    <property type="project" value="UniProtKB-KW"/>
</dbReference>
<dbReference type="GO" id="GO:1904047">
    <property type="term" value="F:S-adenosyl-L-methionine binding"/>
    <property type="evidence" value="ECO:0007669"/>
    <property type="project" value="UniProtKB-UniRule"/>
</dbReference>
<dbReference type="GO" id="GO:0006777">
    <property type="term" value="P:Mo-molybdopterin cofactor biosynthetic process"/>
    <property type="evidence" value="ECO:0007669"/>
    <property type="project" value="UniProtKB-UniRule"/>
</dbReference>
<dbReference type="CDD" id="cd01335">
    <property type="entry name" value="Radical_SAM"/>
    <property type="match status" value="1"/>
</dbReference>
<dbReference type="CDD" id="cd21117">
    <property type="entry name" value="Twitch_MoaA"/>
    <property type="match status" value="1"/>
</dbReference>
<dbReference type="FunFam" id="3.20.20.70:FF:000057">
    <property type="entry name" value="GTP 3',8-cyclase"/>
    <property type="match status" value="1"/>
</dbReference>
<dbReference type="Gene3D" id="3.20.20.70">
    <property type="entry name" value="Aldolase class I"/>
    <property type="match status" value="1"/>
</dbReference>
<dbReference type="HAMAP" id="MF_01225_B">
    <property type="entry name" value="MoaA_B"/>
    <property type="match status" value="1"/>
</dbReference>
<dbReference type="InterPro" id="IPR013785">
    <property type="entry name" value="Aldolase_TIM"/>
</dbReference>
<dbReference type="InterPro" id="IPR006638">
    <property type="entry name" value="Elp3/MiaA/NifB-like_rSAM"/>
</dbReference>
<dbReference type="InterPro" id="IPR013483">
    <property type="entry name" value="MoaA"/>
</dbReference>
<dbReference type="InterPro" id="IPR000385">
    <property type="entry name" value="MoaA_NifB_PqqE_Fe-S-bd_CS"/>
</dbReference>
<dbReference type="InterPro" id="IPR010505">
    <property type="entry name" value="MoaA_twitch"/>
</dbReference>
<dbReference type="InterPro" id="IPR050105">
    <property type="entry name" value="MoCo_biosynth_MoaA/MoaC"/>
</dbReference>
<dbReference type="InterPro" id="IPR007197">
    <property type="entry name" value="rSAM"/>
</dbReference>
<dbReference type="NCBIfam" id="TIGR02666">
    <property type="entry name" value="moaA"/>
    <property type="match status" value="1"/>
</dbReference>
<dbReference type="PANTHER" id="PTHR22960:SF28">
    <property type="entry name" value="GTP 3',8-CYCLASE"/>
    <property type="match status" value="1"/>
</dbReference>
<dbReference type="PANTHER" id="PTHR22960">
    <property type="entry name" value="MOLYBDOPTERIN COFACTOR SYNTHESIS PROTEIN A"/>
    <property type="match status" value="1"/>
</dbReference>
<dbReference type="Pfam" id="PF13353">
    <property type="entry name" value="Fer4_12"/>
    <property type="match status" value="1"/>
</dbReference>
<dbReference type="Pfam" id="PF06463">
    <property type="entry name" value="Mob_synth_C"/>
    <property type="match status" value="1"/>
</dbReference>
<dbReference type="Pfam" id="PF04055">
    <property type="entry name" value="Radical_SAM"/>
    <property type="match status" value="1"/>
</dbReference>
<dbReference type="SFLD" id="SFLDG01383">
    <property type="entry name" value="cyclic_pyranopterin_phosphate"/>
    <property type="match status" value="1"/>
</dbReference>
<dbReference type="SFLD" id="SFLDS00029">
    <property type="entry name" value="Radical_SAM"/>
    <property type="match status" value="1"/>
</dbReference>
<dbReference type="SMART" id="SM00729">
    <property type="entry name" value="Elp3"/>
    <property type="match status" value="1"/>
</dbReference>
<dbReference type="SUPFAM" id="SSF102114">
    <property type="entry name" value="Radical SAM enzymes"/>
    <property type="match status" value="1"/>
</dbReference>
<dbReference type="PROSITE" id="PS01305">
    <property type="entry name" value="MOAA_NIFB_PQQE"/>
    <property type="match status" value="1"/>
</dbReference>
<dbReference type="PROSITE" id="PS51918">
    <property type="entry name" value="RADICAL_SAM"/>
    <property type="match status" value="1"/>
</dbReference>
<feature type="chain" id="PRO_1000139320" description="GTP 3',8-cyclase">
    <location>
        <begin position="1"/>
        <end position="329"/>
    </location>
</feature>
<feature type="domain" description="Radical SAM core" evidence="2">
    <location>
        <begin position="8"/>
        <end position="234"/>
    </location>
</feature>
<feature type="binding site" evidence="1">
    <location>
        <position position="17"/>
    </location>
    <ligand>
        <name>GTP</name>
        <dbReference type="ChEBI" id="CHEBI:37565"/>
    </ligand>
</feature>
<feature type="binding site" evidence="1">
    <location>
        <position position="24"/>
    </location>
    <ligand>
        <name>[4Fe-4S] cluster</name>
        <dbReference type="ChEBI" id="CHEBI:49883"/>
        <label>1</label>
        <note>4Fe-4S-S-AdoMet</note>
    </ligand>
</feature>
<feature type="binding site" evidence="1">
    <location>
        <position position="28"/>
    </location>
    <ligand>
        <name>[4Fe-4S] cluster</name>
        <dbReference type="ChEBI" id="CHEBI:49883"/>
        <label>1</label>
        <note>4Fe-4S-S-AdoMet</note>
    </ligand>
</feature>
<feature type="binding site" evidence="1">
    <location>
        <position position="30"/>
    </location>
    <ligand>
        <name>S-adenosyl-L-methionine</name>
        <dbReference type="ChEBI" id="CHEBI:59789"/>
    </ligand>
</feature>
<feature type="binding site" evidence="1">
    <location>
        <position position="31"/>
    </location>
    <ligand>
        <name>[4Fe-4S] cluster</name>
        <dbReference type="ChEBI" id="CHEBI:49883"/>
        <label>1</label>
        <note>4Fe-4S-S-AdoMet</note>
    </ligand>
</feature>
<feature type="binding site" evidence="1">
    <location>
        <position position="68"/>
    </location>
    <ligand>
        <name>GTP</name>
        <dbReference type="ChEBI" id="CHEBI:37565"/>
    </ligand>
</feature>
<feature type="binding site" evidence="1">
    <location>
        <position position="72"/>
    </location>
    <ligand>
        <name>S-adenosyl-L-methionine</name>
        <dbReference type="ChEBI" id="CHEBI:59789"/>
    </ligand>
</feature>
<feature type="binding site" evidence="1">
    <location>
        <position position="99"/>
    </location>
    <ligand>
        <name>GTP</name>
        <dbReference type="ChEBI" id="CHEBI:37565"/>
    </ligand>
</feature>
<feature type="binding site" evidence="1">
    <location>
        <position position="123"/>
    </location>
    <ligand>
        <name>S-adenosyl-L-methionine</name>
        <dbReference type="ChEBI" id="CHEBI:59789"/>
    </ligand>
</feature>
<feature type="binding site" evidence="1">
    <location>
        <position position="160"/>
    </location>
    <ligand>
        <name>GTP</name>
        <dbReference type="ChEBI" id="CHEBI:37565"/>
    </ligand>
</feature>
<feature type="binding site" evidence="1">
    <location>
        <position position="194"/>
    </location>
    <ligand>
        <name>S-adenosyl-L-methionine</name>
        <dbReference type="ChEBI" id="CHEBI:59789"/>
    </ligand>
</feature>
<feature type="binding site" evidence="1">
    <location>
        <position position="257"/>
    </location>
    <ligand>
        <name>[4Fe-4S] cluster</name>
        <dbReference type="ChEBI" id="CHEBI:49883"/>
        <label>2</label>
        <note>4Fe-4S-substrate</note>
    </ligand>
</feature>
<feature type="binding site" evidence="1">
    <location>
        <position position="260"/>
    </location>
    <ligand>
        <name>[4Fe-4S] cluster</name>
        <dbReference type="ChEBI" id="CHEBI:49883"/>
        <label>2</label>
        <note>4Fe-4S-substrate</note>
    </ligand>
</feature>
<feature type="binding site" evidence="1">
    <location>
        <begin position="262"/>
        <end position="264"/>
    </location>
    <ligand>
        <name>GTP</name>
        <dbReference type="ChEBI" id="CHEBI:37565"/>
    </ligand>
</feature>
<feature type="binding site" evidence="1">
    <location>
        <position position="274"/>
    </location>
    <ligand>
        <name>[4Fe-4S] cluster</name>
        <dbReference type="ChEBI" id="CHEBI:49883"/>
        <label>2</label>
        <note>4Fe-4S-substrate</note>
    </ligand>
</feature>
<protein>
    <recommendedName>
        <fullName evidence="1">GTP 3',8-cyclase</fullName>
        <ecNumber evidence="1">4.1.99.22</ecNumber>
    </recommendedName>
    <alternativeName>
        <fullName evidence="1">Molybdenum cofactor biosynthesis protein A</fullName>
    </alternativeName>
</protein>
<reference key="1">
    <citation type="journal article" date="2009" name="PLoS Genet.">
        <title>Organised genome dynamics in the Escherichia coli species results in highly diverse adaptive paths.</title>
        <authorList>
            <person name="Touchon M."/>
            <person name="Hoede C."/>
            <person name="Tenaillon O."/>
            <person name="Barbe V."/>
            <person name="Baeriswyl S."/>
            <person name="Bidet P."/>
            <person name="Bingen E."/>
            <person name="Bonacorsi S."/>
            <person name="Bouchier C."/>
            <person name="Bouvet O."/>
            <person name="Calteau A."/>
            <person name="Chiapello H."/>
            <person name="Clermont O."/>
            <person name="Cruveiller S."/>
            <person name="Danchin A."/>
            <person name="Diard M."/>
            <person name="Dossat C."/>
            <person name="Karoui M.E."/>
            <person name="Frapy E."/>
            <person name="Garry L."/>
            <person name="Ghigo J.M."/>
            <person name="Gilles A.M."/>
            <person name="Johnson J."/>
            <person name="Le Bouguenec C."/>
            <person name="Lescat M."/>
            <person name="Mangenot S."/>
            <person name="Martinez-Jehanne V."/>
            <person name="Matic I."/>
            <person name="Nassif X."/>
            <person name="Oztas S."/>
            <person name="Petit M.A."/>
            <person name="Pichon C."/>
            <person name="Rouy Z."/>
            <person name="Ruf C.S."/>
            <person name="Schneider D."/>
            <person name="Tourret J."/>
            <person name="Vacherie B."/>
            <person name="Vallenet D."/>
            <person name="Medigue C."/>
            <person name="Rocha E.P.C."/>
            <person name="Denamur E."/>
        </authorList>
    </citation>
    <scope>NUCLEOTIDE SEQUENCE [LARGE SCALE GENOMIC DNA]</scope>
    <source>
        <strain>IAI39 / ExPEC</strain>
    </source>
</reference>
<comment type="function">
    <text evidence="1">Catalyzes the cyclization of GTP to (8S)-3',8-cyclo-7,8-dihydroguanosine 5'-triphosphate.</text>
</comment>
<comment type="catalytic activity">
    <reaction evidence="1">
        <text>GTP + AH2 + S-adenosyl-L-methionine = (8S)-3',8-cyclo-7,8-dihydroguanosine 5'-triphosphate + 5'-deoxyadenosine + L-methionine + A + H(+)</text>
        <dbReference type="Rhea" id="RHEA:49576"/>
        <dbReference type="ChEBI" id="CHEBI:13193"/>
        <dbReference type="ChEBI" id="CHEBI:15378"/>
        <dbReference type="ChEBI" id="CHEBI:17319"/>
        <dbReference type="ChEBI" id="CHEBI:17499"/>
        <dbReference type="ChEBI" id="CHEBI:37565"/>
        <dbReference type="ChEBI" id="CHEBI:57844"/>
        <dbReference type="ChEBI" id="CHEBI:59789"/>
        <dbReference type="ChEBI" id="CHEBI:131766"/>
        <dbReference type="EC" id="4.1.99.22"/>
    </reaction>
</comment>
<comment type="cofactor">
    <cofactor evidence="1">
        <name>[4Fe-4S] cluster</name>
        <dbReference type="ChEBI" id="CHEBI:49883"/>
    </cofactor>
    <text evidence="1">Binds 2 [4Fe-4S] clusters. Binds 1 [4Fe-4S] cluster coordinated with 3 cysteines and an exchangeable S-adenosyl-L-methionine and 1 [4Fe-4S] cluster coordinated with 3 cysteines and the GTP-derived substrate.</text>
</comment>
<comment type="pathway">
    <text evidence="1">Cofactor biosynthesis; molybdopterin biosynthesis.</text>
</comment>
<comment type="subunit">
    <text evidence="1">Monomer and homodimer.</text>
</comment>
<comment type="similarity">
    <text evidence="1">Belongs to the radical SAM superfamily. MoaA family.</text>
</comment>
<gene>
    <name evidence="1" type="primary">moaA</name>
    <name type="ordered locus">ECIAI39_0757</name>
</gene>
<name>MOAA_ECO7I</name>
<keyword id="KW-0004">4Fe-4S</keyword>
<keyword id="KW-0342">GTP-binding</keyword>
<keyword id="KW-0408">Iron</keyword>
<keyword id="KW-0411">Iron-sulfur</keyword>
<keyword id="KW-0456">Lyase</keyword>
<keyword id="KW-0479">Metal-binding</keyword>
<keyword id="KW-0501">Molybdenum cofactor biosynthesis</keyword>
<keyword id="KW-0547">Nucleotide-binding</keyword>
<keyword id="KW-0949">S-adenosyl-L-methionine</keyword>
<evidence type="ECO:0000255" key="1">
    <source>
        <dbReference type="HAMAP-Rule" id="MF_01225"/>
    </source>
</evidence>
<evidence type="ECO:0000255" key="2">
    <source>
        <dbReference type="PROSITE-ProRule" id="PRU01266"/>
    </source>
</evidence>